<sequence>MIEKGAEISGKRRGRNNAANSKSLGTNVNGSNSWEEGSSSSSSDDEPGGGGMRVGLQYQAVVPEFDQEVAKNCQERENLGMLVWSPNQNISEAKLDEYISVAKEKHGYNMEQALGMLFWHKHNIEKSLADLLNFTPFPDEWTVEDRVLFEQAFSFHGKTFHRIQQMLPDKSIASLVKFYYSWKKTRSKTSVMDRHARKQKREREGSGDEIEETNGANPVDIEIEQPKEAKKEVPKNDTVPHIKKEKHPSQAKNRAKRKPPNGMFLSQEDVEAVSANANAATTVLRQLDMELVSIKRQIQNIKQTNSAFKEKLQGGIEDYRIQEVSQKFNARWTTEEQLLAVQAIRMYGRDFQAISDVIGNKSVVQVKNFFVNYRRRFNIDQVLQEWEAEHGKTEENGDCTEKAVKLPETAIKMSDEEEEASLLDITYPSAS</sequence>
<feature type="chain" id="PRO_0000226775" description="REST corepressor 1">
    <location>
        <begin position="1"/>
        <end position="431"/>
    </location>
</feature>
<feature type="domain" description="ELM2" evidence="3">
    <location>
        <begin position="50"/>
        <end position="135"/>
    </location>
</feature>
<feature type="domain" description="SANT 1" evidence="4">
    <location>
        <begin position="136"/>
        <end position="187"/>
    </location>
</feature>
<feature type="domain" description="SANT 2" evidence="4">
    <location>
        <begin position="327"/>
        <end position="378"/>
    </location>
</feature>
<feature type="region of interest" description="Disordered" evidence="5">
    <location>
        <begin position="1"/>
        <end position="53"/>
    </location>
</feature>
<feature type="region of interest" description="Disordered" evidence="5">
    <location>
        <begin position="190"/>
        <end position="262"/>
    </location>
</feature>
<feature type="coiled-coil region" evidence="2">
    <location>
        <begin position="267"/>
        <end position="314"/>
    </location>
</feature>
<feature type="compositionally biased region" description="Basic and acidic residues" evidence="5">
    <location>
        <begin position="1"/>
        <end position="10"/>
    </location>
</feature>
<feature type="compositionally biased region" description="Polar residues" evidence="5">
    <location>
        <begin position="17"/>
        <end position="28"/>
    </location>
</feature>
<feature type="compositionally biased region" description="Low complexity" evidence="5">
    <location>
        <begin position="29"/>
        <end position="42"/>
    </location>
</feature>
<feature type="compositionally biased region" description="Basic and acidic residues" evidence="5">
    <location>
        <begin position="224"/>
        <end position="242"/>
    </location>
</feature>
<name>RCOR1_XENLA</name>
<gene>
    <name type="primary">rcor1</name>
    <name type="synonym">corest</name>
</gene>
<comment type="function">
    <text evidence="1">Essential component of the BHC complex, a corepressor complex that represses transcription of neuron-specific genes in non-neuronal cells. The BHC complex is recruited at RE1/NRSE sites by REST and acts by deacetylating and demethylating specific sites on histones, thereby acting as a chromatin modifier. In the BHC complex, it serves as a molecular beacon for the recruitment of molecular machinery that imposes silencing across a chromosomal interval. Plays a central role in demethylation of Lys-4 of histone H3 by promoting demethylase activity of KDM1A on core histones and nucleosomal substrates (By similarity).</text>
</comment>
<comment type="subunit">
    <text evidence="1">Component of a BHC histone deacetylase complex that contains KDM1A.</text>
</comment>
<comment type="subcellular location">
    <subcellularLocation>
        <location evidence="3 4">Nucleus</location>
    </subcellularLocation>
</comment>
<comment type="tissue specificity">
    <text evidence="6">Expressed in territories in which neurogenesis takes place.</text>
</comment>
<comment type="similarity">
    <text evidence="7">Belongs to the CoREST family.</text>
</comment>
<reference key="1">
    <citation type="journal article" date="2002" name="Mech. Dev.">
        <title>The Xiro-repressed gene CoREST is expressed in Xenopus neural territories.</title>
        <authorList>
            <person name="de la Calle-Mustienes E."/>
            <person name="Modolell J."/>
            <person name="Gomez-Skarmeta J.L."/>
        </authorList>
    </citation>
    <scope>NUCLEOTIDE SEQUENCE [MRNA]</scope>
    <scope>TISSUE SPECIFICITY</scope>
</reference>
<dbReference type="EMBL" id="AJ311849">
    <property type="protein sequence ID" value="CAC67558.1"/>
    <property type="molecule type" value="mRNA"/>
</dbReference>
<dbReference type="RefSeq" id="NP_001082141.1">
    <property type="nucleotide sequence ID" value="NM_001088672.1"/>
</dbReference>
<dbReference type="SMR" id="Q90WN5"/>
<dbReference type="GeneID" id="398247"/>
<dbReference type="KEGG" id="xla:398247"/>
<dbReference type="AGR" id="Xenbase:XB-GENE-5727224"/>
<dbReference type="CTD" id="398247"/>
<dbReference type="Xenbase" id="XB-GENE-5727224">
    <property type="gene designation" value="rcor1.L"/>
</dbReference>
<dbReference type="OMA" id="HFFVSYR"/>
<dbReference type="OrthoDB" id="10064338at2759"/>
<dbReference type="Proteomes" id="UP000186698">
    <property type="component" value="Chromosome 8L"/>
</dbReference>
<dbReference type="Bgee" id="398247">
    <property type="expression patterns" value="Expressed in egg cell and 19 other cell types or tissues"/>
</dbReference>
<dbReference type="GO" id="GO:0000118">
    <property type="term" value="C:histone deacetylase complex"/>
    <property type="evidence" value="ECO:0000318"/>
    <property type="project" value="GO_Central"/>
</dbReference>
<dbReference type="GO" id="GO:0005667">
    <property type="term" value="C:transcription regulator complex"/>
    <property type="evidence" value="ECO:0000318"/>
    <property type="project" value="GO_Central"/>
</dbReference>
<dbReference type="GO" id="GO:0003714">
    <property type="term" value="F:transcription corepressor activity"/>
    <property type="evidence" value="ECO:0000318"/>
    <property type="project" value="GO_Central"/>
</dbReference>
<dbReference type="GO" id="GO:0006325">
    <property type="term" value="P:chromatin organization"/>
    <property type="evidence" value="ECO:0007669"/>
    <property type="project" value="UniProtKB-KW"/>
</dbReference>
<dbReference type="GO" id="GO:0045892">
    <property type="term" value="P:negative regulation of DNA-templated transcription"/>
    <property type="evidence" value="ECO:0000318"/>
    <property type="project" value="GO_Central"/>
</dbReference>
<dbReference type="GO" id="GO:0006357">
    <property type="term" value="P:regulation of transcription by RNA polymerase II"/>
    <property type="evidence" value="ECO:0000318"/>
    <property type="project" value="GO_Central"/>
</dbReference>
<dbReference type="CDD" id="cd00167">
    <property type="entry name" value="SANT"/>
    <property type="match status" value="1"/>
</dbReference>
<dbReference type="FunFam" id="1.20.58.1880:FF:000001">
    <property type="entry name" value="REST corepressor 1"/>
    <property type="match status" value="1"/>
</dbReference>
<dbReference type="FunFam" id="1.10.10.60:FF:000033">
    <property type="entry name" value="REST corepressor 3"/>
    <property type="match status" value="1"/>
</dbReference>
<dbReference type="FunFam" id="4.10.1240.50:FF:000002">
    <property type="entry name" value="REST corepressor isoform X1"/>
    <property type="match status" value="1"/>
</dbReference>
<dbReference type="Gene3D" id="1.20.58.1880">
    <property type="match status" value="1"/>
</dbReference>
<dbReference type="Gene3D" id="4.10.1240.50">
    <property type="match status" value="1"/>
</dbReference>
<dbReference type="Gene3D" id="1.10.10.60">
    <property type="entry name" value="Homeodomain-like"/>
    <property type="match status" value="1"/>
</dbReference>
<dbReference type="InterPro" id="IPR000949">
    <property type="entry name" value="ELM2_dom"/>
</dbReference>
<dbReference type="InterPro" id="IPR009057">
    <property type="entry name" value="Homeodomain-like_sf"/>
</dbReference>
<dbReference type="InterPro" id="IPR049048">
    <property type="entry name" value="REST_helical"/>
</dbReference>
<dbReference type="InterPro" id="IPR001005">
    <property type="entry name" value="SANT/Myb"/>
</dbReference>
<dbReference type="InterPro" id="IPR017884">
    <property type="entry name" value="SANT_dom"/>
</dbReference>
<dbReference type="InterPro" id="IPR051066">
    <property type="entry name" value="Trans_reg/Corepressor"/>
</dbReference>
<dbReference type="PANTHER" id="PTHR16089:SF11">
    <property type="entry name" value="REST COREPRESSOR 1"/>
    <property type="match status" value="1"/>
</dbReference>
<dbReference type="PANTHER" id="PTHR16089">
    <property type="entry name" value="REST COREPRESSOR COREST PROTEIN-RELATED"/>
    <property type="match status" value="1"/>
</dbReference>
<dbReference type="Pfam" id="PF01448">
    <property type="entry name" value="ELM2"/>
    <property type="match status" value="1"/>
</dbReference>
<dbReference type="Pfam" id="PF00249">
    <property type="entry name" value="Myb_DNA-binding"/>
    <property type="match status" value="2"/>
</dbReference>
<dbReference type="Pfam" id="PF20878">
    <property type="entry name" value="REST_helical"/>
    <property type="match status" value="1"/>
</dbReference>
<dbReference type="SMART" id="SM01189">
    <property type="entry name" value="ELM2"/>
    <property type="match status" value="1"/>
</dbReference>
<dbReference type="SMART" id="SM00717">
    <property type="entry name" value="SANT"/>
    <property type="match status" value="2"/>
</dbReference>
<dbReference type="SUPFAM" id="SSF46689">
    <property type="entry name" value="Homeodomain-like"/>
    <property type="match status" value="2"/>
</dbReference>
<dbReference type="PROSITE" id="PS51156">
    <property type="entry name" value="ELM2"/>
    <property type="match status" value="1"/>
</dbReference>
<dbReference type="PROSITE" id="PS51293">
    <property type="entry name" value="SANT"/>
    <property type="match status" value="2"/>
</dbReference>
<evidence type="ECO:0000250" key="1"/>
<evidence type="ECO:0000255" key="2"/>
<evidence type="ECO:0000255" key="3">
    <source>
        <dbReference type="PROSITE-ProRule" id="PRU00512"/>
    </source>
</evidence>
<evidence type="ECO:0000255" key="4">
    <source>
        <dbReference type="PROSITE-ProRule" id="PRU00624"/>
    </source>
</evidence>
<evidence type="ECO:0000256" key="5">
    <source>
        <dbReference type="SAM" id="MobiDB-lite"/>
    </source>
</evidence>
<evidence type="ECO:0000269" key="6">
    <source>
    </source>
</evidence>
<evidence type="ECO:0000305" key="7"/>
<accession>Q90WN5</accession>
<proteinExistence type="evidence at transcript level"/>
<protein>
    <recommendedName>
        <fullName>REST corepressor 1</fullName>
    </recommendedName>
    <alternativeName>
        <fullName>Protein CoREST</fullName>
        <shortName>xCoREST</shortName>
    </alternativeName>
</protein>
<keyword id="KW-0156">Chromatin regulator</keyword>
<keyword id="KW-0175">Coiled coil</keyword>
<keyword id="KW-0539">Nucleus</keyword>
<keyword id="KW-1185">Reference proteome</keyword>
<keyword id="KW-0677">Repeat</keyword>
<keyword id="KW-0678">Repressor</keyword>
<keyword id="KW-0804">Transcription</keyword>
<keyword id="KW-0805">Transcription regulation</keyword>
<organism>
    <name type="scientific">Xenopus laevis</name>
    <name type="common">African clawed frog</name>
    <dbReference type="NCBI Taxonomy" id="8355"/>
    <lineage>
        <taxon>Eukaryota</taxon>
        <taxon>Metazoa</taxon>
        <taxon>Chordata</taxon>
        <taxon>Craniata</taxon>
        <taxon>Vertebrata</taxon>
        <taxon>Euteleostomi</taxon>
        <taxon>Amphibia</taxon>
        <taxon>Batrachia</taxon>
        <taxon>Anura</taxon>
        <taxon>Pipoidea</taxon>
        <taxon>Pipidae</taxon>
        <taxon>Xenopodinae</taxon>
        <taxon>Xenopus</taxon>
        <taxon>Xenopus</taxon>
    </lineage>
</organism>